<reference key="1">
    <citation type="journal article" date="2002" name="Nat. Biotechnol.">
        <title>Genome sequence of the dissimilatory metal ion-reducing bacterium Shewanella oneidensis.</title>
        <authorList>
            <person name="Heidelberg J.F."/>
            <person name="Paulsen I.T."/>
            <person name="Nelson K.E."/>
            <person name="Gaidos E.J."/>
            <person name="Nelson W.C."/>
            <person name="Read T.D."/>
            <person name="Eisen J.A."/>
            <person name="Seshadri R."/>
            <person name="Ward N.L."/>
            <person name="Methe B.A."/>
            <person name="Clayton R.A."/>
            <person name="Meyer T."/>
            <person name="Tsapin A."/>
            <person name="Scott J."/>
            <person name="Beanan M.J."/>
            <person name="Brinkac L.M."/>
            <person name="Daugherty S.C."/>
            <person name="DeBoy R.T."/>
            <person name="Dodson R.J."/>
            <person name="Durkin A.S."/>
            <person name="Haft D.H."/>
            <person name="Kolonay J.F."/>
            <person name="Madupu R."/>
            <person name="Peterson J.D."/>
            <person name="Umayam L.A."/>
            <person name="White O."/>
            <person name="Wolf A.M."/>
            <person name="Vamathevan J.J."/>
            <person name="Weidman J.F."/>
            <person name="Impraim M."/>
            <person name="Lee K."/>
            <person name="Berry K.J."/>
            <person name="Lee C."/>
            <person name="Mueller J."/>
            <person name="Khouri H.M."/>
            <person name="Gill J."/>
            <person name="Utterback T.R."/>
            <person name="McDonald L.A."/>
            <person name="Feldblyum T.V."/>
            <person name="Smith H.O."/>
            <person name="Venter J.C."/>
            <person name="Nealson K.H."/>
            <person name="Fraser C.M."/>
        </authorList>
    </citation>
    <scope>NUCLEOTIDE SEQUENCE [LARGE SCALE GENOMIC DNA]</scope>
    <source>
        <strain>ATCC 700550 / JCM 31522 / CIP 106686 / LMG 19005 / NCIMB 14063 / MR-1</strain>
    </source>
</reference>
<feature type="chain" id="PRO_0000203896" description="DNA-binding protein Fis">
    <location>
        <begin position="1"/>
        <end position="101"/>
    </location>
</feature>
<feature type="DNA-binding region" description="H-T-H motif" evidence="1">
    <location>
        <begin position="77"/>
        <end position="96"/>
    </location>
</feature>
<name>FIS_SHEON</name>
<accession>Q8EJR9</accession>
<sequence>MFDQTTNTEVHQLTVGKIETANGTIKPQLLRDAVKRAVTNFFAQLDGQEAQEVYEMVLSEVEAPLLDIIMQHTRGNQTRAANMLGINRGTLRKKLKKYGMN</sequence>
<evidence type="ECO:0000255" key="1">
    <source>
        <dbReference type="HAMAP-Rule" id="MF_00166"/>
    </source>
</evidence>
<keyword id="KW-0010">Activator</keyword>
<keyword id="KW-0238">DNA-binding</keyword>
<keyword id="KW-1185">Reference proteome</keyword>
<keyword id="KW-0804">Transcription</keyword>
<keyword id="KW-0805">Transcription regulation</keyword>
<protein>
    <recommendedName>
        <fullName evidence="1">DNA-binding protein Fis</fullName>
    </recommendedName>
</protein>
<organism>
    <name type="scientific">Shewanella oneidensis (strain ATCC 700550 / JCM 31522 / CIP 106686 / LMG 19005 / NCIMB 14063 / MR-1)</name>
    <dbReference type="NCBI Taxonomy" id="211586"/>
    <lineage>
        <taxon>Bacteria</taxon>
        <taxon>Pseudomonadati</taxon>
        <taxon>Pseudomonadota</taxon>
        <taxon>Gammaproteobacteria</taxon>
        <taxon>Alteromonadales</taxon>
        <taxon>Shewanellaceae</taxon>
        <taxon>Shewanella</taxon>
    </lineage>
</organism>
<comment type="function">
    <text evidence="1">Activates ribosomal RNA transcription. Plays a direct role in upstream activation of rRNA promoters.</text>
</comment>
<comment type="subunit">
    <text evidence="1">Homodimer.</text>
</comment>
<comment type="similarity">
    <text evidence="1">Belongs to the transcriptional regulatory Fis family.</text>
</comment>
<gene>
    <name evidence="1" type="primary">fis</name>
    <name type="ordered locus">SO_0393</name>
</gene>
<dbReference type="EMBL" id="AE014299">
    <property type="protein sequence ID" value="AAN53476.1"/>
    <property type="molecule type" value="Genomic_DNA"/>
</dbReference>
<dbReference type="RefSeq" id="NP_716031.1">
    <property type="nucleotide sequence ID" value="NC_004347.2"/>
</dbReference>
<dbReference type="RefSeq" id="WP_006083371.1">
    <property type="nucleotide sequence ID" value="NZ_CP053946.1"/>
</dbReference>
<dbReference type="SMR" id="Q8EJR9"/>
<dbReference type="STRING" id="211586.SO_0393"/>
<dbReference type="PaxDb" id="211586-SO_0393"/>
<dbReference type="GeneID" id="94726394"/>
<dbReference type="KEGG" id="son:SO_0393"/>
<dbReference type="PATRIC" id="fig|211586.12.peg.383"/>
<dbReference type="eggNOG" id="COG2901">
    <property type="taxonomic scope" value="Bacteria"/>
</dbReference>
<dbReference type="HOGENOM" id="CLU_158040_3_3_6"/>
<dbReference type="OrthoDB" id="9802388at2"/>
<dbReference type="PhylomeDB" id="Q8EJR9"/>
<dbReference type="BioCyc" id="SONE211586:G1GMP-378-MONOMER"/>
<dbReference type="PRO" id="PR:Q8EJR9"/>
<dbReference type="Proteomes" id="UP000008186">
    <property type="component" value="Chromosome"/>
</dbReference>
<dbReference type="GO" id="GO:0003700">
    <property type="term" value="F:DNA-binding transcription factor activity"/>
    <property type="evidence" value="ECO:0007669"/>
    <property type="project" value="UniProtKB-UniRule"/>
</dbReference>
<dbReference type="GO" id="GO:0043565">
    <property type="term" value="F:sequence-specific DNA binding"/>
    <property type="evidence" value="ECO:0000318"/>
    <property type="project" value="GO_Central"/>
</dbReference>
<dbReference type="FunFam" id="1.10.10.60:FF:000006">
    <property type="entry name" value="DNA-binding protein Fis"/>
    <property type="match status" value="1"/>
</dbReference>
<dbReference type="Gene3D" id="1.10.10.60">
    <property type="entry name" value="Homeodomain-like"/>
    <property type="match status" value="1"/>
</dbReference>
<dbReference type="HAMAP" id="MF_00166">
    <property type="entry name" value="DNA_binding_Fis"/>
    <property type="match status" value="1"/>
</dbReference>
<dbReference type="InterPro" id="IPR005412">
    <property type="entry name" value="Fis_DNA-bd"/>
</dbReference>
<dbReference type="InterPro" id="IPR009057">
    <property type="entry name" value="Homeodomain-like_sf"/>
</dbReference>
<dbReference type="InterPro" id="IPR002197">
    <property type="entry name" value="HTH_Fis"/>
</dbReference>
<dbReference type="InterPro" id="IPR050207">
    <property type="entry name" value="Trans_regulatory_Fis"/>
</dbReference>
<dbReference type="NCBIfam" id="NF001659">
    <property type="entry name" value="PRK00430.1"/>
    <property type="match status" value="1"/>
</dbReference>
<dbReference type="PANTHER" id="PTHR47918">
    <property type="entry name" value="DNA-BINDING PROTEIN FIS"/>
    <property type="match status" value="1"/>
</dbReference>
<dbReference type="PANTHER" id="PTHR47918:SF1">
    <property type="entry name" value="DNA-BINDING PROTEIN FIS"/>
    <property type="match status" value="1"/>
</dbReference>
<dbReference type="Pfam" id="PF02954">
    <property type="entry name" value="HTH_8"/>
    <property type="match status" value="1"/>
</dbReference>
<dbReference type="PIRSF" id="PIRSF002097">
    <property type="entry name" value="DNA-binding_Fis"/>
    <property type="match status" value="1"/>
</dbReference>
<dbReference type="PRINTS" id="PR01591">
    <property type="entry name" value="DNABINDNGFIS"/>
</dbReference>
<dbReference type="PRINTS" id="PR01590">
    <property type="entry name" value="HTHFIS"/>
</dbReference>
<dbReference type="SUPFAM" id="SSF46689">
    <property type="entry name" value="Homeodomain-like"/>
    <property type="match status" value="1"/>
</dbReference>
<proteinExistence type="inferred from homology"/>